<reference key="1">
    <citation type="journal article" date="2008" name="J. Biotechnol.">
        <title>The genome of Xanthomonas campestris pv. campestris B100 and its use for the reconstruction of metabolic pathways involved in xanthan biosynthesis.</title>
        <authorList>
            <person name="Vorhoelter F.-J."/>
            <person name="Schneiker S."/>
            <person name="Goesmann A."/>
            <person name="Krause L."/>
            <person name="Bekel T."/>
            <person name="Kaiser O."/>
            <person name="Linke B."/>
            <person name="Patschkowski T."/>
            <person name="Rueckert C."/>
            <person name="Schmid J."/>
            <person name="Sidhu V.K."/>
            <person name="Sieber V."/>
            <person name="Tauch A."/>
            <person name="Watt S.A."/>
            <person name="Weisshaar B."/>
            <person name="Becker A."/>
            <person name="Niehaus K."/>
            <person name="Puehler A."/>
        </authorList>
    </citation>
    <scope>NUCLEOTIDE SEQUENCE [LARGE SCALE GENOMIC DNA]</scope>
    <source>
        <strain>B100</strain>
    </source>
</reference>
<sequence length="180" mass="19182">MAEERAPRGRDRDRNREEKVDDGMIEKLVAVNRVSKTVKGGRQFTFTALTVVGDGLGKVGFGYGKAREVPVAIQKSMEQARKNLATVDLNNGTLWHAVKSGHGAARVYMQPASEGTGVIAGGAMRAVLEAVGVKNVLAKAVGSRNPINLVRATLKGLSEVQSPARVAAKRGKKVEELNHG</sequence>
<gene>
    <name evidence="1" type="primary">rpsE</name>
    <name type="ordered locus">xcc-b100_3442</name>
</gene>
<accession>B0RU65</accession>
<dbReference type="EMBL" id="AM920689">
    <property type="protein sequence ID" value="CAP52807.1"/>
    <property type="molecule type" value="Genomic_DNA"/>
</dbReference>
<dbReference type="SMR" id="B0RU65"/>
<dbReference type="KEGG" id="xca:xcc-b100_3442"/>
<dbReference type="HOGENOM" id="CLU_065898_2_2_6"/>
<dbReference type="Proteomes" id="UP000001188">
    <property type="component" value="Chromosome"/>
</dbReference>
<dbReference type="GO" id="GO:0015935">
    <property type="term" value="C:small ribosomal subunit"/>
    <property type="evidence" value="ECO:0007669"/>
    <property type="project" value="InterPro"/>
</dbReference>
<dbReference type="GO" id="GO:0019843">
    <property type="term" value="F:rRNA binding"/>
    <property type="evidence" value="ECO:0007669"/>
    <property type="project" value="UniProtKB-UniRule"/>
</dbReference>
<dbReference type="GO" id="GO:0003735">
    <property type="term" value="F:structural constituent of ribosome"/>
    <property type="evidence" value="ECO:0007669"/>
    <property type="project" value="InterPro"/>
</dbReference>
<dbReference type="GO" id="GO:0006412">
    <property type="term" value="P:translation"/>
    <property type="evidence" value="ECO:0007669"/>
    <property type="project" value="UniProtKB-UniRule"/>
</dbReference>
<dbReference type="FunFam" id="3.30.160.20:FF:000001">
    <property type="entry name" value="30S ribosomal protein S5"/>
    <property type="match status" value="1"/>
</dbReference>
<dbReference type="FunFam" id="3.30.230.10:FF:000002">
    <property type="entry name" value="30S ribosomal protein S5"/>
    <property type="match status" value="1"/>
</dbReference>
<dbReference type="Gene3D" id="3.30.160.20">
    <property type="match status" value="1"/>
</dbReference>
<dbReference type="Gene3D" id="3.30.230.10">
    <property type="match status" value="1"/>
</dbReference>
<dbReference type="HAMAP" id="MF_01307_B">
    <property type="entry name" value="Ribosomal_uS5_B"/>
    <property type="match status" value="1"/>
</dbReference>
<dbReference type="InterPro" id="IPR020568">
    <property type="entry name" value="Ribosomal_Su5_D2-typ_SF"/>
</dbReference>
<dbReference type="InterPro" id="IPR000851">
    <property type="entry name" value="Ribosomal_uS5"/>
</dbReference>
<dbReference type="InterPro" id="IPR005712">
    <property type="entry name" value="Ribosomal_uS5_bac-type"/>
</dbReference>
<dbReference type="InterPro" id="IPR005324">
    <property type="entry name" value="Ribosomal_uS5_C"/>
</dbReference>
<dbReference type="InterPro" id="IPR013810">
    <property type="entry name" value="Ribosomal_uS5_N"/>
</dbReference>
<dbReference type="InterPro" id="IPR018192">
    <property type="entry name" value="Ribosomal_uS5_N_CS"/>
</dbReference>
<dbReference type="InterPro" id="IPR014721">
    <property type="entry name" value="Ribsml_uS5_D2-typ_fold_subgr"/>
</dbReference>
<dbReference type="NCBIfam" id="TIGR01021">
    <property type="entry name" value="rpsE_bact"/>
    <property type="match status" value="1"/>
</dbReference>
<dbReference type="PANTHER" id="PTHR48277">
    <property type="entry name" value="MITOCHONDRIAL RIBOSOMAL PROTEIN S5"/>
    <property type="match status" value="1"/>
</dbReference>
<dbReference type="PANTHER" id="PTHR48277:SF1">
    <property type="entry name" value="MITOCHONDRIAL RIBOSOMAL PROTEIN S5"/>
    <property type="match status" value="1"/>
</dbReference>
<dbReference type="Pfam" id="PF00333">
    <property type="entry name" value="Ribosomal_S5"/>
    <property type="match status" value="1"/>
</dbReference>
<dbReference type="Pfam" id="PF03719">
    <property type="entry name" value="Ribosomal_S5_C"/>
    <property type="match status" value="1"/>
</dbReference>
<dbReference type="SUPFAM" id="SSF54768">
    <property type="entry name" value="dsRNA-binding domain-like"/>
    <property type="match status" value="1"/>
</dbReference>
<dbReference type="SUPFAM" id="SSF54211">
    <property type="entry name" value="Ribosomal protein S5 domain 2-like"/>
    <property type="match status" value="1"/>
</dbReference>
<dbReference type="PROSITE" id="PS00585">
    <property type="entry name" value="RIBOSOMAL_S5"/>
    <property type="match status" value="1"/>
</dbReference>
<dbReference type="PROSITE" id="PS50881">
    <property type="entry name" value="S5_DSRBD"/>
    <property type="match status" value="1"/>
</dbReference>
<feature type="chain" id="PRO_1000140905" description="Small ribosomal subunit protein uS5">
    <location>
        <begin position="1"/>
        <end position="180"/>
    </location>
</feature>
<feature type="domain" description="S5 DRBM" evidence="1">
    <location>
        <begin position="24"/>
        <end position="87"/>
    </location>
</feature>
<comment type="function">
    <text evidence="1">With S4 and S12 plays an important role in translational accuracy.</text>
</comment>
<comment type="function">
    <text evidence="1">Located at the back of the 30S subunit body where it stabilizes the conformation of the head with respect to the body.</text>
</comment>
<comment type="subunit">
    <text evidence="1">Part of the 30S ribosomal subunit. Contacts proteins S4 and S8.</text>
</comment>
<comment type="domain">
    <text>The N-terminal domain interacts with the head of the 30S subunit; the C-terminal domain interacts with the body and contacts protein S4. The interaction surface between S4 and S5 is involved in control of translational fidelity.</text>
</comment>
<comment type="similarity">
    <text evidence="1">Belongs to the universal ribosomal protein uS5 family.</text>
</comment>
<evidence type="ECO:0000255" key="1">
    <source>
        <dbReference type="HAMAP-Rule" id="MF_01307"/>
    </source>
</evidence>
<evidence type="ECO:0000305" key="2"/>
<name>RS5_XANCB</name>
<protein>
    <recommendedName>
        <fullName evidence="1">Small ribosomal subunit protein uS5</fullName>
    </recommendedName>
    <alternativeName>
        <fullName evidence="2">30S ribosomal protein S5</fullName>
    </alternativeName>
</protein>
<organism>
    <name type="scientific">Xanthomonas campestris pv. campestris (strain B100)</name>
    <dbReference type="NCBI Taxonomy" id="509169"/>
    <lineage>
        <taxon>Bacteria</taxon>
        <taxon>Pseudomonadati</taxon>
        <taxon>Pseudomonadota</taxon>
        <taxon>Gammaproteobacteria</taxon>
        <taxon>Lysobacterales</taxon>
        <taxon>Lysobacteraceae</taxon>
        <taxon>Xanthomonas</taxon>
    </lineage>
</organism>
<proteinExistence type="inferred from homology"/>
<keyword id="KW-0687">Ribonucleoprotein</keyword>
<keyword id="KW-0689">Ribosomal protein</keyword>
<keyword id="KW-0694">RNA-binding</keyword>
<keyword id="KW-0699">rRNA-binding</keyword>